<keyword id="KW-0963">Cytoplasm</keyword>
<keyword id="KW-0444">Lipid biosynthesis</keyword>
<keyword id="KW-0443">Lipid metabolism</keyword>
<keyword id="KW-0594">Phospholipid biosynthesis</keyword>
<keyword id="KW-1208">Phospholipid metabolism</keyword>
<keyword id="KW-1185">Reference proteome</keyword>
<keyword id="KW-0808">Transferase</keyword>
<dbReference type="EC" id="2.3.1.274" evidence="1"/>
<dbReference type="EMBL" id="AE003852">
    <property type="protein sequence ID" value="AAF95172.1"/>
    <property type="molecule type" value="Genomic_DNA"/>
</dbReference>
<dbReference type="PIR" id="A82129">
    <property type="entry name" value="A82129"/>
</dbReference>
<dbReference type="RefSeq" id="NP_231658.1">
    <property type="nucleotide sequence ID" value="NC_002505.1"/>
</dbReference>
<dbReference type="RefSeq" id="WP_001180565.1">
    <property type="nucleotide sequence ID" value="NZ_LT906614.1"/>
</dbReference>
<dbReference type="SMR" id="Q9KQH4"/>
<dbReference type="STRING" id="243277.VC_2024"/>
<dbReference type="DNASU" id="2613403"/>
<dbReference type="EnsemblBacteria" id="AAF95172">
    <property type="protein sequence ID" value="AAF95172"/>
    <property type="gene ID" value="VC_2024"/>
</dbReference>
<dbReference type="KEGG" id="vch:VC_2024"/>
<dbReference type="PATRIC" id="fig|243277.26.peg.1934"/>
<dbReference type="eggNOG" id="COG0416">
    <property type="taxonomic scope" value="Bacteria"/>
</dbReference>
<dbReference type="HOGENOM" id="CLU_039379_1_0_6"/>
<dbReference type="UniPathway" id="UPA00085"/>
<dbReference type="Proteomes" id="UP000000584">
    <property type="component" value="Chromosome 1"/>
</dbReference>
<dbReference type="GO" id="GO:0005737">
    <property type="term" value="C:cytoplasm"/>
    <property type="evidence" value="ECO:0007669"/>
    <property type="project" value="UniProtKB-SubCell"/>
</dbReference>
<dbReference type="GO" id="GO:0043811">
    <property type="term" value="F:phosphate:acyl-[acyl carrier protein] acyltransferase activity"/>
    <property type="evidence" value="ECO:0007669"/>
    <property type="project" value="UniProtKB-UniRule"/>
</dbReference>
<dbReference type="GO" id="GO:0006633">
    <property type="term" value="P:fatty acid biosynthetic process"/>
    <property type="evidence" value="ECO:0007669"/>
    <property type="project" value="UniProtKB-UniRule"/>
</dbReference>
<dbReference type="GO" id="GO:0008654">
    <property type="term" value="P:phospholipid biosynthetic process"/>
    <property type="evidence" value="ECO:0007669"/>
    <property type="project" value="UniProtKB-KW"/>
</dbReference>
<dbReference type="FunFam" id="3.40.718.10:FF:000008">
    <property type="entry name" value="Phosphate acyltransferase"/>
    <property type="match status" value="1"/>
</dbReference>
<dbReference type="Gene3D" id="3.40.718.10">
    <property type="entry name" value="Isopropylmalate Dehydrogenase"/>
    <property type="match status" value="1"/>
</dbReference>
<dbReference type="HAMAP" id="MF_00019">
    <property type="entry name" value="PlsX"/>
    <property type="match status" value="1"/>
</dbReference>
<dbReference type="InterPro" id="IPR003664">
    <property type="entry name" value="FA_synthesis"/>
</dbReference>
<dbReference type="InterPro" id="IPR012281">
    <property type="entry name" value="Phospholipid_synth_PlsX-like"/>
</dbReference>
<dbReference type="NCBIfam" id="TIGR00182">
    <property type="entry name" value="plsX"/>
    <property type="match status" value="1"/>
</dbReference>
<dbReference type="PANTHER" id="PTHR30100">
    <property type="entry name" value="FATTY ACID/PHOSPHOLIPID SYNTHESIS PROTEIN PLSX"/>
    <property type="match status" value="1"/>
</dbReference>
<dbReference type="PANTHER" id="PTHR30100:SF1">
    <property type="entry name" value="PHOSPHATE ACYLTRANSFERASE"/>
    <property type="match status" value="1"/>
</dbReference>
<dbReference type="Pfam" id="PF02504">
    <property type="entry name" value="FA_synthesis"/>
    <property type="match status" value="1"/>
</dbReference>
<dbReference type="PIRSF" id="PIRSF002465">
    <property type="entry name" value="Phsphlp_syn_PlsX"/>
    <property type="match status" value="1"/>
</dbReference>
<dbReference type="SUPFAM" id="SSF53659">
    <property type="entry name" value="Isocitrate/Isopropylmalate dehydrogenase-like"/>
    <property type="match status" value="1"/>
</dbReference>
<reference key="1">
    <citation type="journal article" date="2000" name="Nature">
        <title>DNA sequence of both chromosomes of the cholera pathogen Vibrio cholerae.</title>
        <authorList>
            <person name="Heidelberg J.F."/>
            <person name="Eisen J.A."/>
            <person name="Nelson W.C."/>
            <person name="Clayton R.A."/>
            <person name="Gwinn M.L."/>
            <person name="Dodson R.J."/>
            <person name="Haft D.H."/>
            <person name="Hickey E.K."/>
            <person name="Peterson J.D."/>
            <person name="Umayam L.A."/>
            <person name="Gill S.R."/>
            <person name="Nelson K.E."/>
            <person name="Read T.D."/>
            <person name="Tettelin H."/>
            <person name="Richardson D.L."/>
            <person name="Ermolaeva M.D."/>
            <person name="Vamathevan J.J."/>
            <person name="Bass S."/>
            <person name="Qin H."/>
            <person name="Dragoi I."/>
            <person name="Sellers P."/>
            <person name="McDonald L.A."/>
            <person name="Utterback T.R."/>
            <person name="Fleischmann R.D."/>
            <person name="Nierman W.C."/>
            <person name="White O."/>
            <person name="Salzberg S.L."/>
            <person name="Smith H.O."/>
            <person name="Colwell R.R."/>
            <person name="Mekalanos J.J."/>
            <person name="Venter J.C."/>
            <person name="Fraser C.M."/>
        </authorList>
    </citation>
    <scope>NUCLEOTIDE SEQUENCE [LARGE SCALE GENOMIC DNA]</scope>
    <source>
        <strain>ATCC 39315 / El Tor Inaba N16961</strain>
    </source>
</reference>
<organism>
    <name type="scientific">Vibrio cholerae serotype O1 (strain ATCC 39315 / El Tor Inaba N16961)</name>
    <dbReference type="NCBI Taxonomy" id="243277"/>
    <lineage>
        <taxon>Bacteria</taxon>
        <taxon>Pseudomonadati</taxon>
        <taxon>Pseudomonadota</taxon>
        <taxon>Gammaproteobacteria</taxon>
        <taxon>Vibrionales</taxon>
        <taxon>Vibrionaceae</taxon>
        <taxon>Vibrio</taxon>
    </lineage>
</organism>
<protein>
    <recommendedName>
        <fullName evidence="1">Phosphate acyltransferase</fullName>
        <ecNumber evidence="1">2.3.1.274</ecNumber>
    </recommendedName>
    <alternativeName>
        <fullName evidence="1">Acyl-ACP phosphotransacylase</fullName>
    </alternativeName>
    <alternativeName>
        <fullName evidence="1">Acyl-[acyl-carrier-protein]--phosphate acyltransferase</fullName>
    </alternativeName>
    <alternativeName>
        <fullName evidence="1">Phosphate-acyl-ACP acyltransferase</fullName>
    </alternativeName>
</protein>
<comment type="function">
    <text evidence="1">Catalyzes the reversible formation of acyl-phosphate (acyl-PO(4)) from acyl-[acyl-carrier-protein] (acyl-ACP). This enzyme utilizes acyl-ACP as fatty acyl donor, but not acyl-CoA.</text>
</comment>
<comment type="catalytic activity">
    <reaction evidence="1">
        <text>a fatty acyl-[ACP] + phosphate = an acyl phosphate + holo-[ACP]</text>
        <dbReference type="Rhea" id="RHEA:42292"/>
        <dbReference type="Rhea" id="RHEA-COMP:9685"/>
        <dbReference type="Rhea" id="RHEA-COMP:14125"/>
        <dbReference type="ChEBI" id="CHEBI:43474"/>
        <dbReference type="ChEBI" id="CHEBI:59918"/>
        <dbReference type="ChEBI" id="CHEBI:64479"/>
        <dbReference type="ChEBI" id="CHEBI:138651"/>
        <dbReference type="EC" id="2.3.1.274"/>
    </reaction>
</comment>
<comment type="pathway">
    <text evidence="1">Lipid metabolism; phospholipid metabolism.</text>
</comment>
<comment type="subunit">
    <text evidence="1">Homodimer. Probably interacts with PlsY.</text>
</comment>
<comment type="subcellular location">
    <subcellularLocation>
        <location evidence="1">Cytoplasm</location>
    </subcellularLocation>
    <text evidence="1">Associated with the membrane possibly through PlsY.</text>
</comment>
<comment type="similarity">
    <text evidence="1">Belongs to the PlsX family.</text>
</comment>
<evidence type="ECO:0000255" key="1">
    <source>
        <dbReference type="HAMAP-Rule" id="MF_00019"/>
    </source>
</evidence>
<gene>
    <name evidence="1" type="primary">plsX</name>
    <name type="ordered locus">VC_2024</name>
</gene>
<feature type="chain" id="PRO_0000189961" description="Phosphate acyltransferase">
    <location>
        <begin position="1"/>
        <end position="341"/>
    </location>
</feature>
<proteinExistence type="inferred from homology"/>
<sequence length="341" mass="36482">MQNLTVALDAMGGDFGPRVTVPAAVQALSHFPELKVILVGDQHQITQQLSLLGYSADTRLSIVHSDRVISNSEKPSLALRHSAGSSMGMAIDLVAENQADACVSGGNTGALMALSRFRLKLLPGIDRPALVSALPTISGRKTWMLDLGANVSSDADSLFQFAVMGAALAEQHLQQAPRVAILNIGAEEIKGNDLVKRCAEMLTQTQAINFIGYIEGNQLLTDAADVIVCDGFVGNVCLKACEGTAQLFIDKLKKSLLASSIKGWIARKLFSELFTELKTLNPDQYNGASLLGLRGIVIKSHGSADVSAVVNAISEAVHEVKRQVPSRISDRLEAVLLERHY</sequence>
<accession>Q9KQH4</accession>
<name>PLSX_VIBCH</name>